<comment type="function">
    <text evidence="3">Core component of the type VI (T6SS) secretion system that plays a role in the release of toxins targeting both eukaryotic and prokaryotic species. Plays an essential role in stabilization of assembled TssK1 structure at a fixed perimembrane site.</text>
</comment>
<comment type="subcellular location">
    <subcellularLocation>
        <location evidence="2">Cell inner membrane</location>
        <topology evidence="1">Single-pass membrane protein</topology>
    </subcellularLocation>
</comment>
<comment type="disruption phenotype">
    <text evidence="3">In the deletion mutant, TssB1 is still recruited to the structure containing TssK1, but the assembly of TssB1-sheath is aborted likely at the nucleation stage.</text>
</comment>
<keyword id="KW-0997">Cell inner membrane</keyword>
<keyword id="KW-1003">Cell membrane</keyword>
<keyword id="KW-0472">Membrane</keyword>
<keyword id="KW-1185">Reference proteome</keyword>
<keyword id="KW-0812">Transmembrane</keyword>
<keyword id="KW-1133">Transmembrane helix</keyword>
<protein>
    <recommendedName>
        <fullName evidence="4">Type VI secretion system component TssM1</fullName>
    </recommendedName>
</protein>
<sequence length="1101" mass="121460">MQSLAEVSAPDAASVATAEELATLKQRMDEALALLKRAKLGGSERRNLYELPWYVIIGPPGSGKTTALMNSGLDFPLAAQMGAGAIRGVGGTRNCDWWFTDEAVLLDTAGRYTTQDSHAQVDKAAWLGFLDLLKTQRKRRPIDGAFIAISLSDLLLGSDAERAAHAQAIRARIQELYQQLGVRFPIYVMLTKFDLVPGFMEFFDSLNREERAQVWGMTFALDDGKSAEGPLAVFDSEFALLEQRLTARLVERLQQERDPARRDLVYGFPQQFAALRECLGEFLNGVFKPNPYEERPLLRGLYFTSGTQEGSPIDRLIGSMAQSMNLDRQHLARQTGTGRSYFIERLFREVAFGERGLVGTNPKVERRRKWLTIGALSATALVVLAVTAVWIASYRANQSYIAAVDQRVDPLARGIESLSPAQRDVLAVLPQLNAVQNLAGDAPSWAEGYGLYQGDMLGEESASVYRKLLIAVFAPRLVTRIEEQLRSGGSSDFLYEGLKAYLMLGSPDHYDADFIKAWISLDWERNLPRDLSPEQRQALHAHLDALLERRPPSARLDQDLVEDLRRQLQQLPVAQRVYDRVKRQRLPKDVPDFRISDAAGRDAPLVFARKSGKPLTDPLSGFFTYRGYREVFLTASLSQAGTIAEEQWVLGRDLNDAGDAANLALDVRRLYFQDYLRQWDDLLADLTVVPITNVTQAADVLRILSGPTSPFRKLLEAVARETDLQKGDRLVAAQVKKAADGTVDKLKQRLGSLVGQEEEGAREQPRQVDSDPISAHFAELNSLVSKGEGGNEPAPIDSLLEDMNALYVQVSAMAGASGDSLLGDAKNQVAAAASRVALSAERQPPVVQGLVKNVVNSTTSSMMGSVRNQLNAAWISDVVSVYRQSLAGRYPIAAGSSRDATLEDFGHFFGAGGVMDSYFRQYLQPYVDTSASTWRWQPGAAQKLGINPGVLHTFQRAAAIRDAFFRSGGMQPTVRFELKPVTMDAAISQFILDLDGQQLTYDHGPSRPVAMQWPSANGLGVVRLTVTPPPSSGRSGLTLEGPWAWFRLLDQSDLERGNSPDRFTLRLRIDGSSIACELRASSAFNPFKSRVVSGFSLPERL</sequence>
<feature type="chain" id="PRO_0000449267" description="Type VI secretion system component TssM1">
    <location>
        <begin position="1"/>
        <end position="1101"/>
    </location>
</feature>
<feature type="transmembrane region" description="Helical" evidence="1">
    <location>
        <begin position="371"/>
        <end position="391"/>
    </location>
</feature>
<organism>
    <name type="scientific">Pseudomonas aeruginosa (strain ATCC 15692 / DSM 22644 / CIP 104116 / JCM 14847 / LMG 12228 / 1C / PRS 101 / PAO1)</name>
    <dbReference type="NCBI Taxonomy" id="208964"/>
    <lineage>
        <taxon>Bacteria</taxon>
        <taxon>Pseudomonadati</taxon>
        <taxon>Pseudomonadota</taxon>
        <taxon>Gammaproteobacteria</taxon>
        <taxon>Pseudomonadales</taxon>
        <taxon>Pseudomonadaceae</taxon>
        <taxon>Pseudomonas</taxon>
    </lineage>
</organism>
<evidence type="ECO:0000255" key="1"/>
<evidence type="ECO:0000269" key="2">
    <source>
    </source>
</evidence>
<evidence type="ECO:0000269" key="3">
    <source>
    </source>
</evidence>
<evidence type="ECO:0000303" key="4">
    <source>
    </source>
</evidence>
<gene>
    <name evidence="4" type="primary">tssM1</name>
    <name type="ordered locus">PA0077</name>
</gene>
<reference key="1">
    <citation type="journal article" date="2000" name="Nature">
        <title>Complete genome sequence of Pseudomonas aeruginosa PAO1, an opportunistic pathogen.</title>
        <authorList>
            <person name="Stover C.K."/>
            <person name="Pham X.-Q.T."/>
            <person name="Erwin A.L."/>
            <person name="Mizoguchi S.D."/>
            <person name="Warrener P."/>
            <person name="Hickey M.J."/>
            <person name="Brinkman F.S.L."/>
            <person name="Hufnagle W.O."/>
            <person name="Kowalik D.J."/>
            <person name="Lagrou M."/>
            <person name="Garber R.L."/>
            <person name="Goltry L."/>
            <person name="Tolentino E."/>
            <person name="Westbrock-Wadman S."/>
            <person name="Yuan Y."/>
            <person name="Brody L.L."/>
            <person name="Coulter S.N."/>
            <person name="Folger K.R."/>
            <person name="Kas A."/>
            <person name="Larbig K."/>
            <person name="Lim R.M."/>
            <person name="Smith K.A."/>
            <person name="Spencer D.H."/>
            <person name="Wong G.K.-S."/>
            <person name="Wu Z."/>
            <person name="Paulsen I.T."/>
            <person name="Reizer J."/>
            <person name="Saier M.H. Jr."/>
            <person name="Hancock R.E.W."/>
            <person name="Lory S."/>
            <person name="Olson M.V."/>
        </authorList>
    </citation>
    <scope>NUCLEOTIDE SEQUENCE [LARGE SCALE GENOMIC DNA]</scope>
    <source>
        <strain>ATCC 15692 / DSM 22644 / CIP 104116 / JCM 14847 / LMG 12228 / 1C / PRS 101 / PAO1</strain>
    </source>
</reference>
<reference key="2">
    <citation type="journal article" date="2013" name="Proteomics">
        <title>Proteomic characterization of Pseudomonas aeruginosa PAO1 inner membrane.</title>
        <authorList>
            <person name="Casabona M.G."/>
            <person name="Vandenbrouck Y."/>
            <person name="Attree I."/>
            <person name="Coute Y."/>
        </authorList>
    </citation>
    <scope>SUBCELLULAR LOCATION</scope>
    <source>
        <strain>ATCC 15692 / DSM 22644 / CIP 104116 / JCM 14847 / LMG 12228 / 1C / PRS 101 / PAO1</strain>
    </source>
</reference>
<reference key="3">
    <citation type="journal article" date="2019" name="Front. Microbiol.">
        <title>Baseplate component TssK and spatio-temporal assembly of T6SS in Pseudomonas aeruginosa.</title>
        <authorList>
            <person name="Liebl D."/>
            <person name="Robert-Genthon M."/>
            <person name="Job V."/>
            <person name="Cogoni V."/>
            <person name="Attree I."/>
        </authorList>
    </citation>
    <scope>FUNCTION</scope>
    <scope>DISRUPTION PHENOTYPE</scope>
</reference>
<dbReference type="EMBL" id="AE004091">
    <property type="protein sequence ID" value="AAG03467.1"/>
    <property type="molecule type" value="Genomic_DNA"/>
</dbReference>
<dbReference type="PIR" id="G83637">
    <property type="entry name" value="G83637"/>
</dbReference>
<dbReference type="RefSeq" id="WP_010895493.1">
    <property type="nucleotide sequence ID" value="NC_002516.2"/>
</dbReference>
<dbReference type="SMR" id="Q9I755"/>
<dbReference type="STRING" id="208964.PA0077"/>
<dbReference type="PaxDb" id="208964-PA0077"/>
<dbReference type="KEGG" id="pae:PA0077"/>
<dbReference type="PATRIC" id="fig|208964.12.peg.80"/>
<dbReference type="PseudoCAP" id="PA0077"/>
<dbReference type="HOGENOM" id="CLU_003353_2_1_6"/>
<dbReference type="InParanoid" id="Q9I755"/>
<dbReference type="OrthoDB" id="9758229at2"/>
<dbReference type="PhylomeDB" id="Q9I755"/>
<dbReference type="BioCyc" id="PAER208964:G1FZ6-79-MONOMER"/>
<dbReference type="Proteomes" id="UP000002438">
    <property type="component" value="Chromosome"/>
</dbReference>
<dbReference type="GO" id="GO:0005886">
    <property type="term" value="C:plasma membrane"/>
    <property type="evidence" value="ECO:0007669"/>
    <property type="project" value="UniProtKB-SubCell"/>
</dbReference>
<dbReference type="CDD" id="cd00882">
    <property type="entry name" value="Ras_like_GTPase"/>
    <property type="match status" value="1"/>
</dbReference>
<dbReference type="InterPro" id="IPR009612">
    <property type="entry name" value="IcmF-rel"/>
</dbReference>
<dbReference type="InterPro" id="IPR010623">
    <property type="entry name" value="IcmF_C"/>
</dbReference>
<dbReference type="InterPro" id="IPR027417">
    <property type="entry name" value="P-loop_NTPase"/>
</dbReference>
<dbReference type="InterPro" id="IPR053156">
    <property type="entry name" value="T6SS_TssM-like"/>
</dbReference>
<dbReference type="InterPro" id="IPR017731">
    <property type="entry name" value="TssM1-like"/>
</dbReference>
<dbReference type="InterPro" id="IPR048677">
    <property type="entry name" value="TssM1_hel"/>
</dbReference>
<dbReference type="InterPro" id="IPR025743">
    <property type="entry name" value="TssM1_N"/>
</dbReference>
<dbReference type="NCBIfam" id="TIGR03348">
    <property type="entry name" value="VI_IcmF"/>
    <property type="match status" value="1"/>
</dbReference>
<dbReference type="PANTHER" id="PTHR36153">
    <property type="entry name" value="INNER MEMBRANE PROTEIN-RELATED"/>
    <property type="match status" value="1"/>
</dbReference>
<dbReference type="PANTHER" id="PTHR36153:SF1">
    <property type="entry name" value="TYPE VI SECRETION SYSTEM COMPONENT TSSM1"/>
    <property type="match status" value="1"/>
</dbReference>
<dbReference type="Pfam" id="PF06761">
    <property type="entry name" value="IcmF-related"/>
    <property type="match status" value="1"/>
</dbReference>
<dbReference type="Pfam" id="PF14331">
    <property type="entry name" value="IcmF-related_N"/>
    <property type="match status" value="1"/>
</dbReference>
<dbReference type="Pfam" id="PF06744">
    <property type="entry name" value="IcmF_C"/>
    <property type="match status" value="1"/>
</dbReference>
<dbReference type="Pfam" id="PF21070">
    <property type="entry name" value="IcmF_helical"/>
    <property type="match status" value="1"/>
</dbReference>
<dbReference type="SUPFAM" id="SSF52540">
    <property type="entry name" value="P-loop containing nucleoside triphosphate hydrolases"/>
    <property type="match status" value="1"/>
</dbReference>
<name>TSSM1_PSEAE</name>
<proteinExistence type="inferred from homology"/>
<accession>Q9I755</accession>